<name>NU2M_PERMC</name>
<sequence length="347" mass="38798">MNPLIFPIIMLTIMLGTLIVMISSHWLMIWMGFEMNMLAVIPVLMKQYNPRSMEAATKYFLTQATASMLLMLAIVINLLHSGQWTFTKLMDPTASIIMTLALTMKLGLAPFHFWVPEVTQGVSLTSGLVLLTWQKLAPLSVLYTIAPVINSDLILTMSILSIMIGGWGGLNQTQLRKILAYSSIAHMGWMTSVLIFNPTMTLLNLLLYILMTSTTFALFMTVSTTTTLSLSHAWNKTPLITTSILIMMLSLGGLPPLTGFLPKWMIIQELTKNDNIILATLMAIAALLSLFFYMRLTYATSLTMFPTTNNMKIKWQFNKIKQMKCLSPLIILSTLTLPLAPAMMILN</sequence>
<proteinExistence type="inferred from homology"/>
<dbReference type="EC" id="7.1.1.2" evidence="1"/>
<dbReference type="EMBL" id="AY504521">
    <property type="protein sequence ID" value="AAS91386.1"/>
    <property type="molecule type" value="Genomic_DNA"/>
</dbReference>
<dbReference type="SMR" id="Q330H1"/>
<dbReference type="GO" id="GO:0005743">
    <property type="term" value="C:mitochondrial inner membrane"/>
    <property type="evidence" value="ECO:0000250"/>
    <property type="project" value="UniProtKB"/>
</dbReference>
<dbReference type="GO" id="GO:0008137">
    <property type="term" value="F:NADH dehydrogenase (ubiquinone) activity"/>
    <property type="evidence" value="ECO:0007669"/>
    <property type="project" value="UniProtKB-EC"/>
</dbReference>
<dbReference type="GO" id="GO:0006120">
    <property type="term" value="P:mitochondrial electron transport, NADH to ubiquinone"/>
    <property type="evidence" value="ECO:0007669"/>
    <property type="project" value="InterPro"/>
</dbReference>
<dbReference type="InterPro" id="IPR050175">
    <property type="entry name" value="Complex_I_Subunit_2"/>
</dbReference>
<dbReference type="InterPro" id="IPR010933">
    <property type="entry name" value="NADH_DH_su2_C"/>
</dbReference>
<dbReference type="InterPro" id="IPR003917">
    <property type="entry name" value="NADH_UbQ_OxRdtase_chain2"/>
</dbReference>
<dbReference type="InterPro" id="IPR001750">
    <property type="entry name" value="ND/Mrp_TM"/>
</dbReference>
<dbReference type="PANTHER" id="PTHR46552">
    <property type="entry name" value="NADH-UBIQUINONE OXIDOREDUCTASE CHAIN 2"/>
    <property type="match status" value="1"/>
</dbReference>
<dbReference type="PANTHER" id="PTHR46552:SF1">
    <property type="entry name" value="NADH-UBIQUINONE OXIDOREDUCTASE CHAIN 2"/>
    <property type="match status" value="1"/>
</dbReference>
<dbReference type="Pfam" id="PF06444">
    <property type="entry name" value="NADH_dehy_S2_C"/>
    <property type="match status" value="1"/>
</dbReference>
<dbReference type="Pfam" id="PF00361">
    <property type="entry name" value="Proton_antipo_M"/>
    <property type="match status" value="1"/>
</dbReference>
<dbReference type="PRINTS" id="PR01436">
    <property type="entry name" value="NADHDHGNASE2"/>
</dbReference>
<organism>
    <name type="scientific">Peropteryx macrotis</name>
    <name type="common">Lesser dog-like bat</name>
    <dbReference type="NCBI Taxonomy" id="249015"/>
    <lineage>
        <taxon>Eukaryota</taxon>
        <taxon>Metazoa</taxon>
        <taxon>Chordata</taxon>
        <taxon>Craniata</taxon>
        <taxon>Vertebrata</taxon>
        <taxon>Euteleostomi</taxon>
        <taxon>Mammalia</taxon>
        <taxon>Eutheria</taxon>
        <taxon>Laurasiatheria</taxon>
        <taxon>Chiroptera</taxon>
        <taxon>Yangochiroptera</taxon>
        <taxon>Emballonuridae</taxon>
        <taxon>Emballonurinae</taxon>
        <taxon>Peropteryx</taxon>
    </lineage>
</organism>
<comment type="function">
    <text evidence="1">Core subunit of the mitochondrial membrane respiratory chain NADH dehydrogenase (Complex I) which catalyzes electron transfer from NADH through the respiratory chain, using ubiquinone as an electron acceptor. Essential for the catalytic activity and assembly of complex I.</text>
</comment>
<comment type="catalytic activity">
    <reaction evidence="1">
        <text>a ubiquinone + NADH + 5 H(+)(in) = a ubiquinol + NAD(+) + 4 H(+)(out)</text>
        <dbReference type="Rhea" id="RHEA:29091"/>
        <dbReference type="Rhea" id="RHEA-COMP:9565"/>
        <dbReference type="Rhea" id="RHEA-COMP:9566"/>
        <dbReference type="ChEBI" id="CHEBI:15378"/>
        <dbReference type="ChEBI" id="CHEBI:16389"/>
        <dbReference type="ChEBI" id="CHEBI:17976"/>
        <dbReference type="ChEBI" id="CHEBI:57540"/>
        <dbReference type="ChEBI" id="CHEBI:57945"/>
        <dbReference type="EC" id="7.1.1.2"/>
    </reaction>
</comment>
<comment type="subunit">
    <text evidence="1 2">Core subunit of respiratory chain NADH dehydrogenase (Complex I) which is composed of 45 different subunits. Interacts with TMEM242 (By similarity).</text>
</comment>
<comment type="subcellular location">
    <subcellularLocation>
        <location evidence="2">Mitochondrion inner membrane</location>
        <topology evidence="3">Multi-pass membrane protein</topology>
    </subcellularLocation>
</comment>
<comment type="similarity">
    <text evidence="4">Belongs to the complex I subunit 2 family.</text>
</comment>
<reference key="1">
    <citation type="submission" date="2003-12" db="EMBL/GenBank/DDBJ databases">
        <title>Bats and birds: flying in the face of mtDNA evolutionary rates.</title>
        <authorList>
            <person name="Worthington Wilmer J.M."/>
            <person name="Schneider C.J."/>
            <person name="Sorenson M.D."/>
        </authorList>
    </citation>
    <scope>NUCLEOTIDE SEQUENCE [GENOMIC DNA]</scope>
    <source>
        <strain>Isolate ET1</strain>
    </source>
</reference>
<protein>
    <recommendedName>
        <fullName evidence="1">NADH-ubiquinone oxidoreductase chain 2</fullName>
        <ecNumber evidence="1">7.1.1.2</ecNumber>
    </recommendedName>
    <alternativeName>
        <fullName>NADH dehydrogenase subunit 2</fullName>
    </alternativeName>
</protein>
<gene>
    <name evidence="1" type="primary">MT-ND2</name>
    <name type="synonym">MTND2</name>
    <name type="synonym">NADH2</name>
    <name type="synonym">ND2</name>
</gene>
<accession>Q330H1</accession>
<feature type="chain" id="PRO_0000256676" description="NADH-ubiquinone oxidoreductase chain 2">
    <location>
        <begin position="1"/>
        <end position="347"/>
    </location>
</feature>
<feature type="transmembrane region" description="Helical" evidence="3">
    <location>
        <begin position="3"/>
        <end position="23"/>
    </location>
</feature>
<feature type="transmembrane region" description="Helical" evidence="3">
    <location>
        <begin position="25"/>
        <end position="45"/>
    </location>
</feature>
<feature type="transmembrane region" description="Helical" evidence="3">
    <location>
        <begin position="59"/>
        <end position="79"/>
    </location>
</feature>
<feature type="transmembrane region" description="Helical" evidence="3">
    <location>
        <begin position="96"/>
        <end position="116"/>
    </location>
</feature>
<feature type="transmembrane region" description="Helical" evidence="3">
    <location>
        <begin position="122"/>
        <end position="142"/>
    </location>
</feature>
<feature type="transmembrane region" description="Helical" evidence="3">
    <location>
        <begin position="145"/>
        <end position="165"/>
    </location>
</feature>
<feature type="transmembrane region" description="Helical" evidence="3">
    <location>
        <begin position="178"/>
        <end position="198"/>
    </location>
</feature>
<feature type="transmembrane region" description="Helical" evidence="3">
    <location>
        <begin position="202"/>
        <end position="222"/>
    </location>
</feature>
<feature type="transmembrane region" description="Helical" evidence="3">
    <location>
        <begin position="240"/>
        <end position="260"/>
    </location>
</feature>
<feature type="transmembrane region" description="Helical" evidence="3">
    <location>
        <begin position="276"/>
        <end position="296"/>
    </location>
</feature>
<feature type="transmembrane region" description="Helical" evidence="3">
    <location>
        <begin position="326"/>
        <end position="346"/>
    </location>
</feature>
<evidence type="ECO:0000250" key="1">
    <source>
        <dbReference type="UniProtKB" id="P03891"/>
    </source>
</evidence>
<evidence type="ECO:0000250" key="2">
    <source>
        <dbReference type="UniProtKB" id="P03892"/>
    </source>
</evidence>
<evidence type="ECO:0000255" key="3"/>
<evidence type="ECO:0000305" key="4"/>
<keyword id="KW-0249">Electron transport</keyword>
<keyword id="KW-0472">Membrane</keyword>
<keyword id="KW-0496">Mitochondrion</keyword>
<keyword id="KW-0999">Mitochondrion inner membrane</keyword>
<keyword id="KW-0520">NAD</keyword>
<keyword id="KW-0679">Respiratory chain</keyword>
<keyword id="KW-1278">Translocase</keyword>
<keyword id="KW-0812">Transmembrane</keyword>
<keyword id="KW-1133">Transmembrane helix</keyword>
<keyword id="KW-0813">Transport</keyword>
<keyword id="KW-0830">Ubiquinone</keyword>
<geneLocation type="mitochondrion"/>